<comment type="function">
    <text evidence="1">NAD-binding protein involved in the addition of a carboxymethylaminomethyl (cmnm) group at the wobble position (U34) of certain tRNAs, forming tRNA-cmnm(5)s(2)U34.</text>
</comment>
<comment type="cofactor">
    <cofactor evidence="1">
        <name>FAD</name>
        <dbReference type="ChEBI" id="CHEBI:57692"/>
    </cofactor>
</comment>
<comment type="subunit">
    <text evidence="1">Homodimer. Heterotetramer of two MnmE and two MnmG subunits.</text>
</comment>
<comment type="subcellular location">
    <subcellularLocation>
        <location evidence="1">Cytoplasm</location>
    </subcellularLocation>
</comment>
<comment type="similarity">
    <text evidence="1">Belongs to the MnmG family.</text>
</comment>
<sequence>MQSTSQQFDVIVVGGGHAGTEAALVAARMGARTLLLTHNIETLGQMSCNPAIGGIGKSHLVKEIDALGGIMALAADQAGIHFRTLNARKGPAVRATRAQADRVLYKAAIHHALENQPHLWLFQQGVDDLIIQNNRAAGVVTQMGLAFYAPTVILTVGTFLGGKIHIGMNHYRGGRAGDPPALALAERLREMPFRVERLKTGTPPRIDGRTINYSQLIEQPSDQPLPLMSYWSHGEDRPRQVSCFITQTNEKTHDIIRNGLKTSPLFSGVIEGVGPRYCPSIEDKIVRFADRNSHQLFLEPEGLNTPEVYPNGVSTSLSFDVQLDFIHSIKGLEKCHITRPGYAIEYDYFDPRDLKPSLETKYVPGLYFAGQINGTTGYEEAAAQGLIAGINAALQIQERAPWTPARDEAYIGVLIDDLTTRGTNEPYRMFTSRAEYRLLLRQDNADLRLTEKGRDLGCVDDERWNFFVKKKETIEKEQQRLKKQRIWPKSTVAKAIESRFQQLLERDYSAMDLLRRPEINYPALMQIEELGPAVLEPSVAEQIDIQAKYEGYLTHQLAEIARQKKYQTAQIPSSLDYNQVTGLSNEVRQKLNETKPTTLGQASRIPGITPAAISLLLVHLKKKELYP</sequence>
<accession>A9NBA8</accession>
<evidence type="ECO:0000255" key="1">
    <source>
        <dbReference type="HAMAP-Rule" id="MF_00129"/>
    </source>
</evidence>
<organism>
    <name type="scientific">Coxiella burnetii (strain RSA 331 / Henzerling II)</name>
    <dbReference type="NCBI Taxonomy" id="360115"/>
    <lineage>
        <taxon>Bacteria</taxon>
        <taxon>Pseudomonadati</taxon>
        <taxon>Pseudomonadota</taxon>
        <taxon>Gammaproteobacteria</taxon>
        <taxon>Legionellales</taxon>
        <taxon>Coxiellaceae</taxon>
        <taxon>Coxiella</taxon>
    </lineage>
</organism>
<protein>
    <recommendedName>
        <fullName evidence="1">tRNA uridine 5-carboxymethylaminomethyl modification enzyme MnmG</fullName>
    </recommendedName>
    <alternativeName>
        <fullName evidence="1">Glucose-inhibited division protein A</fullName>
    </alternativeName>
</protein>
<reference key="1">
    <citation type="submission" date="2007-11" db="EMBL/GenBank/DDBJ databases">
        <title>Genome sequencing of phylogenetically and phenotypically diverse Coxiella burnetii isolates.</title>
        <authorList>
            <person name="Seshadri R."/>
            <person name="Samuel J.E."/>
        </authorList>
    </citation>
    <scope>NUCLEOTIDE SEQUENCE [LARGE SCALE GENOMIC DNA]</scope>
    <source>
        <strain>RSA 331 / Henzerling II</strain>
    </source>
</reference>
<keyword id="KW-0963">Cytoplasm</keyword>
<keyword id="KW-0274">FAD</keyword>
<keyword id="KW-0285">Flavoprotein</keyword>
<keyword id="KW-0520">NAD</keyword>
<keyword id="KW-0819">tRNA processing</keyword>
<gene>
    <name evidence="1" type="primary">mnmG</name>
    <name evidence="1" type="synonym">gidA</name>
    <name type="ordered locus">COXBURSA331_A2125</name>
</gene>
<feature type="chain" id="PRO_1000076315" description="tRNA uridine 5-carboxymethylaminomethyl modification enzyme MnmG">
    <location>
        <begin position="1"/>
        <end position="627"/>
    </location>
</feature>
<feature type="binding site" evidence="1">
    <location>
        <begin position="14"/>
        <end position="19"/>
    </location>
    <ligand>
        <name>FAD</name>
        <dbReference type="ChEBI" id="CHEBI:57692"/>
    </ligand>
</feature>
<feature type="binding site" evidence="1">
    <location>
        <begin position="274"/>
        <end position="288"/>
    </location>
    <ligand>
        <name>NAD(+)</name>
        <dbReference type="ChEBI" id="CHEBI:57540"/>
    </ligand>
</feature>
<proteinExistence type="inferred from homology"/>
<dbReference type="EMBL" id="CP000890">
    <property type="protein sequence ID" value="ABX78769.1"/>
    <property type="molecule type" value="Genomic_DNA"/>
</dbReference>
<dbReference type="RefSeq" id="WP_010958541.1">
    <property type="nucleotide sequence ID" value="NC_010117.1"/>
</dbReference>
<dbReference type="SMR" id="A9NBA8"/>
<dbReference type="KEGG" id="cbs:COXBURSA331_A2125"/>
<dbReference type="HOGENOM" id="CLU_007831_2_2_6"/>
<dbReference type="GO" id="GO:0005829">
    <property type="term" value="C:cytosol"/>
    <property type="evidence" value="ECO:0007669"/>
    <property type="project" value="TreeGrafter"/>
</dbReference>
<dbReference type="GO" id="GO:0050660">
    <property type="term" value="F:flavin adenine dinucleotide binding"/>
    <property type="evidence" value="ECO:0007669"/>
    <property type="project" value="UniProtKB-UniRule"/>
</dbReference>
<dbReference type="GO" id="GO:0030488">
    <property type="term" value="P:tRNA methylation"/>
    <property type="evidence" value="ECO:0007669"/>
    <property type="project" value="TreeGrafter"/>
</dbReference>
<dbReference type="GO" id="GO:0002098">
    <property type="term" value="P:tRNA wobble uridine modification"/>
    <property type="evidence" value="ECO:0007669"/>
    <property type="project" value="InterPro"/>
</dbReference>
<dbReference type="FunFam" id="1.10.10.1800:FF:000001">
    <property type="entry name" value="tRNA uridine 5-carboxymethylaminomethyl modification enzyme MnmG"/>
    <property type="match status" value="1"/>
</dbReference>
<dbReference type="FunFam" id="1.10.150.570:FF:000001">
    <property type="entry name" value="tRNA uridine 5-carboxymethylaminomethyl modification enzyme MnmG"/>
    <property type="match status" value="1"/>
</dbReference>
<dbReference type="FunFam" id="3.50.50.60:FF:000002">
    <property type="entry name" value="tRNA uridine 5-carboxymethylaminomethyl modification enzyme MnmG"/>
    <property type="match status" value="1"/>
</dbReference>
<dbReference type="FunFam" id="3.50.50.60:FF:000010">
    <property type="entry name" value="tRNA uridine 5-carboxymethylaminomethyl modification enzyme MnmG"/>
    <property type="match status" value="1"/>
</dbReference>
<dbReference type="Gene3D" id="3.50.50.60">
    <property type="entry name" value="FAD/NAD(P)-binding domain"/>
    <property type="match status" value="2"/>
</dbReference>
<dbReference type="Gene3D" id="1.10.150.570">
    <property type="entry name" value="GidA associated domain, C-terminal subdomain"/>
    <property type="match status" value="1"/>
</dbReference>
<dbReference type="Gene3D" id="1.10.10.1800">
    <property type="entry name" value="tRNA uridine 5-carboxymethylaminomethyl modification enzyme MnmG/GidA"/>
    <property type="match status" value="1"/>
</dbReference>
<dbReference type="HAMAP" id="MF_00129">
    <property type="entry name" value="MnmG_GidA"/>
    <property type="match status" value="1"/>
</dbReference>
<dbReference type="InterPro" id="IPR036188">
    <property type="entry name" value="FAD/NAD-bd_sf"/>
</dbReference>
<dbReference type="InterPro" id="IPR049312">
    <property type="entry name" value="GIDA_C_N"/>
</dbReference>
<dbReference type="InterPro" id="IPR004416">
    <property type="entry name" value="MnmG"/>
</dbReference>
<dbReference type="InterPro" id="IPR002218">
    <property type="entry name" value="MnmG-rel"/>
</dbReference>
<dbReference type="InterPro" id="IPR020595">
    <property type="entry name" value="MnmG-rel_CS"/>
</dbReference>
<dbReference type="InterPro" id="IPR026904">
    <property type="entry name" value="MnmG_C"/>
</dbReference>
<dbReference type="InterPro" id="IPR047001">
    <property type="entry name" value="MnmG_C_subdom"/>
</dbReference>
<dbReference type="InterPro" id="IPR044920">
    <property type="entry name" value="MnmG_C_subdom_sf"/>
</dbReference>
<dbReference type="InterPro" id="IPR040131">
    <property type="entry name" value="MnmG_N"/>
</dbReference>
<dbReference type="NCBIfam" id="TIGR00136">
    <property type="entry name" value="mnmG_gidA"/>
    <property type="match status" value="1"/>
</dbReference>
<dbReference type="PANTHER" id="PTHR11806">
    <property type="entry name" value="GLUCOSE INHIBITED DIVISION PROTEIN A"/>
    <property type="match status" value="1"/>
</dbReference>
<dbReference type="PANTHER" id="PTHR11806:SF0">
    <property type="entry name" value="PROTEIN MTO1 HOMOLOG, MITOCHONDRIAL"/>
    <property type="match status" value="1"/>
</dbReference>
<dbReference type="Pfam" id="PF01134">
    <property type="entry name" value="GIDA"/>
    <property type="match status" value="1"/>
</dbReference>
<dbReference type="Pfam" id="PF21680">
    <property type="entry name" value="GIDA_C_1st"/>
    <property type="match status" value="1"/>
</dbReference>
<dbReference type="Pfam" id="PF13932">
    <property type="entry name" value="SAM_GIDA_C"/>
    <property type="match status" value="1"/>
</dbReference>
<dbReference type="PRINTS" id="PR00411">
    <property type="entry name" value="PNDRDTASEI"/>
</dbReference>
<dbReference type="SMART" id="SM01228">
    <property type="entry name" value="GIDA_assoc_3"/>
    <property type="match status" value="1"/>
</dbReference>
<dbReference type="SUPFAM" id="SSF51905">
    <property type="entry name" value="FAD/NAD(P)-binding domain"/>
    <property type="match status" value="1"/>
</dbReference>
<dbReference type="PROSITE" id="PS01280">
    <property type="entry name" value="GIDA_1"/>
    <property type="match status" value="1"/>
</dbReference>
<dbReference type="PROSITE" id="PS01281">
    <property type="entry name" value="GIDA_2"/>
    <property type="match status" value="1"/>
</dbReference>
<name>MNMG_COXBR</name>